<name>AMI4G_ARATH</name>
<comment type="catalytic activity">
    <reaction evidence="2">
        <text>a monocarboxylic acid amide + H2O = a monocarboxylate + NH4(+)</text>
        <dbReference type="Rhea" id="RHEA:12020"/>
        <dbReference type="ChEBI" id="CHEBI:15377"/>
        <dbReference type="ChEBI" id="CHEBI:28938"/>
        <dbReference type="ChEBI" id="CHEBI:35757"/>
        <dbReference type="ChEBI" id="CHEBI:83628"/>
        <dbReference type="EC" id="3.5.1.4"/>
    </reaction>
</comment>
<comment type="tissue specificity">
    <text evidence="3">Expressed in vasculature of roots, cotyledons, leaves and sepals.</text>
</comment>
<comment type="similarity">
    <text evidence="4">Belongs to the amidase family.</text>
</comment>
<comment type="sequence caution" evidence="4">
    <conflict type="erroneous gene model prediction">
        <sequence resource="EMBL-CDS" id="AEE86432"/>
    </conflict>
</comment>
<comment type="sequence caution" evidence="4">
    <conflict type="erroneous gene model prediction">
        <sequence resource="EMBL-CDS" id="CAB45449"/>
    </conflict>
</comment>
<comment type="sequence caution" evidence="4">
    <conflict type="erroneous gene model prediction">
        <sequence resource="EMBL-CDS" id="CAB80205"/>
    </conflict>
</comment>
<evidence type="ECO:0000250" key="1">
    <source>
        <dbReference type="UniProtKB" id="Q936X2"/>
    </source>
</evidence>
<evidence type="ECO:0000250" key="2">
    <source>
        <dbReference type="UniProtKB" id="Q9FR37"/>
    </source>
</evidence>
<evidence type="ECO:0000269" key="3">
    <source>
    </source>
</evidence>
<evidence type="ECO:0000305" key="4"/>
<evidence type="ECO:0000312" key="5">
    <source>
        <dbReference type="EMBL" id="ANM67425.1"/>
    </source>
</evidence>
<evidence type="ECO:0000312" key="6">
    <source>
        <dbReference type="EMBL" id="CAB45449.1"/>
    </source>
</evidence>
<accession>A0A1P8B760</accession>
<accession>Q9SW47</accession>
<protein>
    <recommendedName>
        <fullName evidence="4">Probable amidase At4g34880</fullName>
        <ecNumber evidence="2">3.5.1.4</ecNumber>
    </recommendedName>
</protein>
<keyword id="KW-0378">Hydrolase</keyword>
<keyword id="KW-1185">Reference proteome</keyword>
<gene>
    <name evidence="5" type="ordered locus">At4g34880</name>
    <name evidence="5" type="ORF">F11I11.120</name>
    <name evidence="6" type="ORF">T11I11.120</name>
</gene>
<dbReference type="EC" id="3.5.1.4" evidence="2"/>
<dbReference type="EMBL" id="AL079347">
    <property type="protein sequence ID" value="CAB45449.1"/>
    <property type="status" value="ALT_SEQ"/>
    <property type="molecule type" value="Genomic_DNA"/>
</dbReference>
<dbReference type="EMBL" id="AL161586">
    <property type="protein sequence ID" value="CAB80205.1"/>
    <property type="status" value="ALT_SEQ"/>
    <property type="molecule type" value="Genomic_DNA"/>
</dbReference>
<dbReference type="EMBL" id="CP002687">
    <property type="protein sequence ID" value="AEE86432.1"/>
    <property type="status" value="ALT_SEQ"/>
    <property type="molecule type" value="Genomic_DNA"/>
</dbReference>
<dbReference type="EMBL" id="CP002687">
    <property type="protein sequence ID" value="ANM67425.1"/>
    <property type="molecule type" value="Genomic_DNA"/>
</dbReference>
<dbReference type="PIR" id="T10234">
    <property type="entry name" value="T10234"/>
</dbReference>
<dbReference type="RefSeq" id="NP_001329257.1">
    <property type="nucleotide sequence ID" value="NM_001342309.1"/>
</dbReference>
<dbReference type="RefSeq" id="NP_195214.1">
    <property type="nucleotide sequence ID" value="NM_119654.2"/>
</dbReference>
<dbReference type="SMR" id="A0A1P8B760"/>
<dbReference type="FunCoup" id="A0A1P8B760">
    <property type="interactions" value="2"/>
</dbReference>
<dbReference type="STRING" id="3702.A0A1P8B760"/>
<dbReference type="PaxDb" id="3702-AT4G34880.1"/>
<dbReference type="ProteomicsDB" id="244987"/>
<dbReference type="EnsemblPlants" id="AT4G34880.2">
    <property type="protein sequence ID" value="AT4G34880.2"/>
    <property type="gene ID" value="AT4G34880"/>
</dbReference>
<dbReference type="GeneID" id="829640"/>
<dbReference type="Gramene" id="AT4G34880.2">
    <property type="protein sequence ID" value="AT4G34880.2"/>
    <property type="gene ID" value="AT4G34880"/>
</dbReference>
<dbReference type="KEGG" id="ath:AT4G34880"/>
<dbReference type="Araport" id="AT4G34880"/>
<dbReference type="TAIR" id="AT4G34880"/>
<dbReference type="eggNOG" id="KOG1211">
    <property type="taxonomic scope" value="Eukaryota"/>
</dbReference>
<dbReference type="InParanoid" id="A0A1P8B760"/>
<dbReference type="OMA" id="YLMQAMA"/>
<dbReference type="OrthoDB" id="566138at2759"/>
<dbReference type="PRO" id="PR:A0A1P8B760"/>
<dbReference type="Proteomes" id="UP000006548">
    <property type="component" value="Chromosome 4"/>
</dbReference>
<dbReference type="ExpressionAtlas" id="A0A1P8B760">
    <property type="expression patterns" value="baseline and differential"/>
</dbReference>
<dbReference type="GO" id="GO:0004040">
    <property type="term" value="F:amidase activity"/>
    <property type="evidence" value="ECO:0007669"/>
    <property type="project" value="UniProtKB-EC"/>
</dbReference>
<dbReference type="Gene3D" id="3.90.1300.10">
    <property type="entry name" value="Amidase signature (AS) domain"/>
    <property type="match status" value="1"/>
</dbReference>
<dbReference type="InterPro" id="IPR023631">
    <property type="entry name" value="Amidase_dom"/>
</dbReference>
<dbReference type="InterPro" id="IPR036928">
    <property type="entry name" value="AS_sf"/>
</dbReference>
<dbReference type="PANTHER" id="PTHR42678">
    <property type="entry name" value="AMIDASE"/>
    <property type="match status" value="1"/>
</dbReference>
<dbReference type="PANTHER" id="PTHR42678:SF34">
    <property type="entry name" value="OS04G0183300 PROTEIN"/>
    <property type="match status" value="1"/>
</dbReference>
<dbReference type="Pfam" id="PF01425">
    <property type="entry name" value="Amidase"/>
    <property type="match status" value="1"/>
</dbReference>
<dbReference type="SUPFAM" id="SSF75304">
    <property type="entry name" value="Amidase signature (AS) enzymes"/>
    <property type="match status" value="1"/>
</dbReference>
<proteinExistence type="evidence at transcript level"/>
<feature type="chain" id="PRO_5010213546" description="Probable amidase At4g34880">
    <location>
        <begin position="1"/>
        <end position="512"/>
    </location>
</feature>
<feature type="active site" description="Charge relay system" evidence="1">
    <location>
        <position position="117"/>
    </location>
</feature>
<feature type="active site" description="Charge relay system" evidence="1">
    <location>
        <position position="198"/>
    </location>
</feature>
<feature type="active site" description="Acyl-ester intermediate" evidence="1">
    <location>
        <position position="222"/>
    </location>
</feature>
<reference key="1">
    <citation type="journal article" date="1999" name="Nature">
        <title>Sequence and analysis of chromosome 4 of the plant Arabidopsis thaliana.</title>
        <authorList>
            <person name="Mayer K.F.X."/>
            <person name="Schueller C."/>
            <person name="Wambutt R."/>
            <person name="Murphy G."/>
            <person name="Volckaert G."/>
            <person name="Pohl T."/>
            <person name="Duesterhoeft A."/>
            <person name="Stiekema W."/>
            <person name="Entian K.-D."/>
            <person name="Terryn N."/>
            <person name="Harris B."/>
            <person name="Ansorge W."/>
            <person name="Brandt P."/>
            <person name="Grivell L.A."/>
            <person name="Rieger M."/>
            <person name="Weichselgartner M."/>
            <person name="de Simone V."/>
            <person name="Obermaier B."/>
            <person name="Mache R."/>
            <person name="Mueller M."/>
            <person name="Kreis M."/>
            <person name="Delseny M."/>
            <person name="Puigdomenech P."/>
            <person name="Watson M."/>
            <person name="Schmidtheini T."/>
            <person name="Reichert B."/>
            <person name="Portetelle D."/>
            <person name="Perez-Alonso M."/>
            <person name="Boutry M."/>
            <person name="Bancroft I."/>
            <person name="Vos P."/>
            <person name="Hoheisel J."/>
            <person name="Zimmermann W."/>
            <person name="Wedler H."/>
            <person name="Ridley P."/>
            <person name="Langham S.-A."/>
            <person name="McCullagh B."/>
            <person name="Bilham L."/>
            <person name="Robben J."/>
            <person name="van der Schueren J."/>
            <person name="Grymonprez B."/>
            <person name="Chuang Y.-J."/>
            <person name="Vandenbussche F."/>
            <person name="Braeken M."/>
            <person name="Weltjens I."/>
            <person name="Voet M."/>
            <person name="Bastiaens I."/>
            <person name="Aert R."/>
            <person name="Defoor E."/>
            <person name="Weitzenegger T."/>
            <person name="Bothe G."/>
            <person name="Ramsperger U."/>
            <person name="Hilbert H."/>
            <person name="Braun M."/>
            <person name="Holzer E."/>
            <person name="Brandt A."/>
            <person name="Peters S."/>
            <person name="van Staveren M."/>
            <person name="Dirkse W."/>
            <person name="Mooijman P."/>
            <person name="Klein Lankhorst R."/>
            <person name="Rose M."/>
            <person name="Hauf J."/>
            <person name="Koetter P."/>
            <person name="Berneiser S."/>
            <person name="Hempel S."/>
            <person name="Feldpausch M."/>
            <person name="Lamberth S."/>
            <person name="Van den Daele H."/>
            <person name="De Keyser A."/>
            <person name="Buysshaert C."/>
            <person name="Gielen J."/>
            <person name="Villarroel R."/>
            <person name="De Clercq R."/>
            <person name="van Montagu M."/>
            <person name="Rogers J."/>
            <person name="Cronin A."/>
            <person name="Quail M.A."/>
            <person name="Bray-Allen S."/>
            <person name="Clark L."/>
            <person name="Doggett J."/>
            <person name="Hall S."/>
            <person name="Kay M."/>
            <person name="Lennard N."/>
            <person name="McLay K."/>
            <person name="Mayes R."/>
            <person name="Pettett A."/>
            <person name="Rajandream M.A."/>
            <person name="Lyne M."/>
            <person name="Benes V."/>
            <person name="Rechmann S."/>
            <person name="Borkova D."/>
            <person name="Bloecker H."/>
            <person name="Scharfe M."/>
            <person name="Grimm M."/>
            <person name="Loehnert T.-H."/>
            <person name="Dose S."/>
            <person name="de Haan M."/>
            <person name="Maarse A.C."/>
            <person name="Schaefer M."/>
            <person name="Mueller-Auer S."/>
            <person name="Gabel C."/>
            <person name="Fuchs M."/>
            <person name="Fartmann B."/>
            <person name="Granderath K."/>
            <person name="Dauner D."/>
            <person name="Herzl A."/>
            <person name="Neumann S."/>
            <person name="Argiriou A."/>
            <person name="Vitale D."/>
            <person name="Liguori R."/>
            <person name="Piravandi E."/>
            <person name="Massenet O."/>
            <person name="Quigley F."/>
            <person name="Clabauld G."/>
            <person name="Muendlein A."/>
            <person name="Felber R."/>
            <person name="Schnabl S."/>
            <person name="Hiller R."/>
            <person name="Schmidt W."/>
            <person name="Lecharny A."/>
            <person name="Aubourg S."/>
            <person name="Chefdor F."/>
            <person name="Cooke R."/>
            <person name="Berger C."/>
            <person name="Monfort A."/>
            <person name="Casacuberta E."/>
            <person name="Gibbons T."/>
            <person name="Weber N."/>
            <person name="Vandenbol M."/>
            <person name="Bargues M."/>
            <person name="Terol J."/>
            <person name="Torres A."/>
            <person name="Perez-Perez A."/>
            <person name="Purnelle B."/>
            <person name="Bent E."/>
            <person name="Johnson S."/>
            <person name="Tacon D."/>
            <person name="Jesse T."/>
            <person name="Heijnen L."/>
            <person name="Schwarz S."/>
            <person name="Scholler P."/>
            <person name="Heber S."/>
            <person name="Francs P."/>
            <person name="Bielke C."/>
            <person name="Frishman D."/>
            <person name="Haase D."/>
            <person name="Lemcke K."/>
            <person name="Mewes H.-W."/>
            <person name="Stocker S."/>
            <person name="Zaccaria P."/>
            <person name="Bevan M."/>
            <person name="Wilson R.K."/>
            <person name="de la Bastide M."/>
            <person name="Habermann K."/>
            <person name="Parnell L."/>
            <person name="Dedhia N."/>
            <person name="Gnoj L."/>
            <person name="Schutz K."/>
            <person name="Huang E."/>
            <person name="Spiegel L."/>
            <person name="Sekhon M."/>
            <person name="Murray J."/>
            <person name="Sheet P."/>
            <person name="Cordes M."/>
            <person name="Abu-Threideh J."/>
            <person name="Stoneking T."/>
            <person name="Kalicki J."/>
            <person name="Graves T."/>
            <person name="Harmon G."/>
            <person name="Edwards J."/>
            <person name="Latreille P."/>
            <person name="Courtney L."/>
            <person name="Cloud J."/>
            <person name="Abbott A."/>
            <person name="Scott K."/>
            <person name="Johnson D."/>
            <person name="Minx P."/>
            <person name="Bentley D."/>
            <person name="Fulton B."/>
            <person name="Miller N."/>
            <person name="Greco T."/>
            <person name="Kemp K."/>
            <person name="Kramer J."/>
            <person name="Fulton L."/>
            <person name="Mardis E."/>
            <person name="Dante M."/>
            <person name="Pepin K."/>
            <person name="Hillier L.W."/>
            <person name="Nelson J."/>
            <person name="Spieth J."/>
            <person name="Ryan E."/>
            <person name="Andrews S."/>
            <person name="Geisel C."/>
            <person name="Layman D."/>
            <person name="Du H."/>
            <person name="Ali J."/>
            <person name="Berghoff A."/>
            <person name="Jones K."/>
            <person name="Drone K."/>
            <person name="Cotton M."/>
            <person name="Joshu C."/>
            <person name="Antonoiu B."/>
            <person name="Zidanic M."/>
            <person name="Strong C."/>
            <person name="Sun H."/>
            <person name="Lamar B."/>
            <person name="Yordan C."/>
            <person name="Ma P."/>
            <person name="Zhong J."/>
            <person name="Preston R."/>
            <person name="Vil D."/>
            <person name="Shekher M."/>
            <person name="Matero A."/>
            <person name="Shah R."/>
            <person name="Swaby I.K."/>
            <person name="O'Shaughnessy A."/>
            <person name="Rodriguez M."/>
            <person name="Hoffman J."/>
            <person name="Till S."/>
            <person name="Granat S."/>
            <person name="Shohdy N."/>
            <person name="Hasegawa A."/>
            <person name="Hameed A."/>
            <person name="Lodhi M."/>
            <person name="Johnson A."/>
            <person name="Chen E."/>
            <person name="Marra M.A."/>
            <person name="Martienssen R."/>
            <person name="McCombie W.R."/>
        </authorList>
    </citation>
    <scope>NUCLEOTIDE SEQUENCE [LARGE SCALE GENOMIC DNA]</scope>
    <source>
        <strain>cv. Columbia</strain>
    </source>
</reference>
<reference key="2">
    <citation type="journal article" date="2017" name="Plant J.">
        <title>Araport11: a complete reannotation of the Arabidopsis thaliana reference genome.</title>
        <authorList>
            <person name="Cheng C.Y."/>
            <person name="Krishnakumar V."/>
            <person name="Chan A.P."/>
            <person name="Thibaud-Nissen F."/>
            <person name="Schobel S."/>
            <person name="Town C.D."/>
        </authorList>
    </citation>
    <scope>GENOME REANNOTATION</scope>
    <source>
        <strain>cv. Columbia</strain>
    </source>
</reference>
<reference key="3">
    <citation type="journal article" date="2013" name="PLoS ONE">
        <title>Functional characterization of cis-elements conferring vascular vein expression of At4g34880 amidase family protein gene in Arabidopsis.</title>
        <authorList>
            <person name="Wu X."/>
            <person name="Huang R."/>
            <person name="Liu Z."/>
            <person name="Zhang G."/>
        </authorList>
    </citation>
    <scope>TISSUE SPECIFICITY</scope>
</reference>
<sequence>MVALRFFFFSSLLILLILSQALIMSVGSASQIRLSSTFSIQEATIEDIRVAFNEKRLTSKQLVELYLEAISKLNPILHAVIETNPDALIQAEIADRERDLKNTTKLPILHGVPVLLKDSISTKDKLNTTAGSFALLGSVVARDAGVVKRLRESGAVILGKASLSEWAHFRSFSIPDGWSARGLQGKNPYVLSANPSGSSSGSAISVTANLVAVSLGTETDGSILSPASQNSVVGIKPSVGLTSRAGVVPISLRQDSIGPICRTVSDAVHLLDAIVGYDPLDEATKTASEFIPEGGYKQFLTTSGLKGKRLGIVMKHSSLLDHHIKTLRREGAIVINNLTIPNIEVIVGGTDSGEEIALLAEFKMSLNAYLKELVKSPVRSLADVIAYNEEFAEQEKVKEWGQEVFLTAEATSGMGEKEKTALQKMKELSRNGIEKLIEENKLDAIVTLGSDLSSVLAIGGYPGINVPAGYDSGGVPYGISFGGLRFSEPKLIEIAFAFEQATLIRKPPKFIA</sequence>
<organism>
    <name type="scientific">Arabidopsis thaliana</name>
    <name type="common">Mouse-ear cress</name>
    <dbReference type="NCBI Taxonomy" id="3702"/>
    <lineage>
        <taxon>Eukaryota</taxon>
        <taxon>Viridiplantae</taxon>
        <taxon>Streptophyta</taxon>
        <taxon>Embryophyta</taxon>
        <taxon>Tracheophyta</taxon>
        <taxon>Spermatophyta</taxon>
        <taxon>Magnoliopsida</taxon>
        <taxon>eudicotyledons</taxon>
        <taxon>Gunneridae</taxon>
        <taxon>Pentapetalae</taxon>
        <taxon>rosids</taxon>
        <taxon>malvids</taxon>
        <taxon>Brassicales</taxon>
        <taxon>Brassicaceae</taxon>
        <taxon>Camelineae</taxon>
        <taxon>Arabidopsis</taxon>
    </lineage>
</organism>